<feature type="chain" id="PRO_0000349002" description="Heme A synthase">
    <location>
        <begin position="1"/>
        <end position="302"/>
    </location>
</feature>
<feature type="topological domain" description="Cytoplasmic" evidence="1">
    <location>
        <begin position="1"/>
        <end position="8"/>
    </location>
</feature>
<feature type="transmembrane region" description="Helical" evidence="1">
    <location>
        <begin position="9"/>
        <end position="29"/>
    </location>
</feature>
<feature type="topological domain" description="Extracellular" evidence="1">
    <location>
        <begin position="30"/>
        <end position="67"/>
    </location>
</feature>
<feature type="transmembrane region" description="Helical" evidence="1">
    <location>
        <begin position="68"/>
        <end position="88"/>
    </location>
</feature>
<feature type="topological domain" description="Cytoplasmic" evidence="1">
    <location>
        <begin position="89"/>
        <end position="93"/>
    </location>
</feature>
<feature type="transmembrane region" description="Helical" evidence="1">
    <location>
        <begin position="94"/>
        <end position="114"/>
    </location>
</feature>
<feature type="topological domain" description="Extracellular" evidence="1">
    <location>
        <begin position="115"/>
        <end position="125"/>
    </location>
</feature>
<feature type="transmembrane region" description="Helical" evidence="1">
    <location>
        <begin position="126"/>
        <end position="146"/>
    </location>
</feature>
<feature type="topological domain" description="Cytoplasmic" evidence="1">
    <location>
        <begin position="147"/>
        <end position="161"/>
    </location>
</feature>
<feature type="transmembrane region" description="Helical" evidence="1">
    <location>
        <begin position="162"/>
        <end position="182"/>
    </location>
</feature>
<feature type="topological domain" description="Extracellular" evidence="1">
    <location>
        <begin position="183"/>
        <end position="215"/>
    </location>
</feature>
<feature type="transmembrane region" description="Helical" evidence="1">
    <location>
        <begin position="216"/>
        <end position="236"/>
    </location>
</feature>
<feature type="topological domain" description="Cytoplasmic" evidence="1">
    <location>
        <begin position="237"/>
        <end position="244"/>
    </location>
</feature>
<feature type="transmembrane region" description="Helical" evidence="1">
    <location>
        <begin position="245"/>
        <end position="265"/>
    </location>
</feature>
<feature type="topological domain" description="Extracellular" evidence="1">
    <location>
        <begin position="266"/>
        <end position="270"/>
    </location>
</feature>
<feature type="transmembrane region" description="Helical" evidence="1">
    <location>
        <begin position="271"/>
        <end position="291"/>
    </location>
</feature>
<feature type="topological domain" description="Cytoplasmic" evidence="1">
    <location>
        <begin position="292"/>
        <end position="302"/>
    </location>
</feature>
<feature type="active site" evidence="1">
    <location>
        <position position="60"/>
    </location>
</feature>
<feature type="binding site" description="axial binding residue" evidence="1">
    <location>
        <position position="63"/>
    </location>
    <ligand>
        <name>heme o</name>
        <dbReference type="ChEBI" id="CHEBI:24480"/>
    </ligand>
    <ligandPart>
        <name>Fe</name>
        <dbReference type="ChEBI" id="CHEBI:18248"/>
    </ligandPart>
</feature>
<feature type="binding site" description="axial binding residue" evidence="1">
    <location>
        <position position="125"/>
    </location>
    <ligand>
        <name>heme o</name>
        <dbReference type="ChEBI" id="CHEBI:24480"/>
    </ligand>
    <ligandPart>
        <name>Fe</name>
        <dbReference type="ChEBI" id="CHEBI:18248"/>
    </ligandPart>
</feature>
<feature type="binding site" description="axial binding residue" evidence="1">
    <location>
        <position position="214"/>
    </location>
    <ligand>
        <name>heme b</name>
        <dbReference type="ChEBI" id="CHEBI:60344"/>
    </ligand>
    <ligandPart>
        <name>Fe</name>
        <dbReference type="ChEBI" id="CHEBI:18248"/>
    </ligandPart>
</feature>
<feature type="binding site" description="axial binding residue" evidence="1">
    <location>
        <position position="276"/>
    </location>
    <ligand>
        <name>heme b</name>
        <dbReference type="ChEBI" id="CHEBI:60344"/>
    </ligand>
    <ligandPart>
        <name>Fe</name>
        <dbReference type="ChEBI" id="CHEBI:18248"/>
    </ligandPart>
</feature>
<feature type="disulfide bond" description="Essential for catalytic activity" evidence="1">
    <location>
        <begin position="37"/>
        <end position="44"/>
    </location>
</feature>
<accession>Q5HQ52</accession>
<organism>
    <name type="scientific">Staphylococcus epidermidis (strain ATCC 35984 / DSM 28319 / BCRC 17069 / CCUG 31568 / BM 3577 / RP62A)</name>
    <dbReference type="NCBI Taxonomy" id="176279"/>
    <lineage>
        <taxon>Bacteria</taxon>
        <taxon>Bacillati</taxon>
        <taxon>Bacillota</taxon>
        <taxon>Bacilli</taxon>
        <taxon>Bacillales</taxon>
        <taxon>Staphylococcaceae</taxon>
        <taxon>Staphylococcus</taxon>
    </lineage>
</organism>
<gene>
    <name evidence="1" type="primary">ctaA</name>
    <name type="ordered locus">SERP0705</name>
</gene>
<reference key="1">
    <citation type="journal article" date="2005" name="J. Bacteriol.">
        <title>Insights on evolution of virulence and resistance from the complete genome analysis of an early methicillin-resistant Staphylococcus aureus strain and a biofilm-producing methicillin-resistant Staphylococcus epidermidis strain.</title>
        <authorList>
            <person name="Gill S.R."/>
            <person name="Fouts D.E."/>
            <person name="Archer G.L."/>
            <person name="Mongodin E.F."/>
            <person name="DeBoy R.T."/>
            <person name="Ravel J."/>
            <person name="Paulsen I.T."/>
            <person name="Kolonay J.F."/>
            <person name="Brinkac L.M."/>
            <person name="Beanan M.J."/>
            <person name="Dodson R.J."/>
            <person name="Daugherty S.C."/>
            <person name="Madupu R."/>
            <person name="Angiuoli S.V."/>
            <person name="Durkin A.S."/>
            <person name="Haft D.H."/>
            <person name="Vamathevan J.J."/>
            <person name="Khouri H."/>
            <person name="Utterback T.R."/>
            <person name="Lee C."/>
            <person name="Dimitrov G."/>
            <person name="Jiang L."/>
            <person name="Qin H."/>
            <person name="Weidman J."/>
            <person name="Tran K."/>
            <person name="Kang K.H."/>
            <person name="Hance I.R."/>
            <person name="Nelson K.E."/>
            <person name="Fraser C.M."/>
        </authorList>
    </citation>
    <scope>NUCLEOTIDE SEQUENCE [LARGE SCALE GENOMIC DNA]</scope>
    <source>
        <strain>ATCC 35984 / DSM 28319 / BCRC 17069 / CCUG 31568 / BM 3577 / RP62A</strain>
    </source>
</reference>
<keyword id="KW-1003">Cell membrane</keyword>
<keyword id="KW-1015">Disulfide bond</keyword>
<keyword id="KW-0350">Heme biosynthesis</keyword>
<keyword id="KW-0408">Iron</keyword>
<keyword id="KW-0472">Membrane</keyword>
<keyword id="KW-0479">Metal-binding</keyword>
<keyword id="KW-0560">Oxidoreductase</keyword>
<keyword id="KW-1185">Reference proteome</keyword>
<keyword id="KW-0812">Transmembrane</keyword>
<keyword id="KW-1133">Transmembrane helix</keyword>
<dbReference type="EC" id="1.17.99.9" evidence="1"/>
<dbReference type="EMBL" id="CP000029">
    <property type="protein sequence ID" value="AAW54098.1"/>
    <property type="molecule type" value="Genomic_DNA"/>
</dbReference>
<dbReference type="RefSeq" id="WP_001830131.1">
    <property type="nucleotide sequence ID" value="NC_002976.3"/>
</dbReference>
<dbReference type="SMR" id="Q5HQ52"/>
<dbReference type="STRING" id="176279.SERP0705"/>
<dbReference type="KEGG" id="ser:SERP0705"/>
<dbReference type="eggNOG" id="COG1612">
    <property type="taxonomic scope" value="Bacteria"/>
</dbReference>
<dbReference type="HOGENOM" id="CLU_041525_3_1_9"/>
<dbReference type="UniPathway" id="UPA00269">
    <property type="reaction ID" value="UER00713"/>
</dbReference>
<dbReference type="Proteomes" id="UP000000531">
    <property type="component" value="Chromosome"/>
</dbReference>
<dbReference type="GO" id="GO:0005886">
    <property type="term" value="C:plasma membrane"/>
    <property type="evidence" value="ECO:0007669"/>
    <property type="project" value="UniProtKB-SubCell"/>
</dbReference>
<dbReference type="GO" id="GO:0046872">
    <property type="term" value="F:metal ion binding"/>
    <property type="evidence" value="ECO:0007669"/>
    <property type="project" value="UniProtKB-KW"/>
</dbReference>
<dbReference type="GO" id="GO:0016653">
    <property type="term" value="F:oxidoreductase activity, acting on NAD(P)H, heme protein as acceptor"/>
    <property type="evidence" value="ECO:0007669"/>
    <property type="project" value="InterPro"/>
</dbReference>
<dbReference type="GO" id="GO:0006784">
    <property type="term" value="P:heme A biosynthetic process"/>
    <property type="evidence" value="ECO:0007669"/>
    <property type="project" value="UniProtKB-UniRule"/>
</dbReference>
<dbReference type="HAMAP" id="MF_01664">
    <property type="entry name" value="HemeA_synth_type1"/>
    <property type="match status" value="1"/>
</dbReference>
<dbReference type="InterPro" id="IPR003780">
    <property type="entry name" value="COX15/CtaA_fam"/>
</dbReference>
<dbReference type="InterPro" id="IPR050450">
    <property type="entry name" value="COX15/CtaA_HemeA_synthase"/>
</dbReference>
<dbReference type="InterPro" id="IPR023755">
    <property type="entry name" value="HemeA_Synthase_type1"/>
</dbReference>
<dbReference type="PANTHER" id="PTHR35457">
    <property type="entry name" value="HEME A SYNTHASE"/>
    <property type="match status" value="1"/>
</dbReference>
<dbReference type="PANTHER" id="PTHR35457:SF1">
    <property type="entry name" value="HEME A SYNTHASE"/>
    <property type="match status" value="1"/>
</dbReference>
<dbReference type="Pfam" id="PF02628">
    <property type="entry name" value="COX15-CtaA"/>
    <property type="match status" value="1"/>
</dbReference>
<comment type="function">
    <text evidence="1">Catalyzes the conversion of heme O to heme A by two successive hydroxylations of the methyl group at C8. The first hydroxylation forms heme I, the second hydroxylation results in an unstable dihydroxymethyl group, which spontaneously dehydrates, resulting in the formyl group of heme A.</text>
</comment>
<comment type="catalytic activity">
    <reaction evidence="1">
        <text>Fe(II)-heme o + 2 A + H2O = Fe(II)-heme a + 2 AH2</text>
        <dbReference type="Rhea" id="RHEA:63388"/>
        <dbReference type="ChEBI" id="CHEBI:13193"/>
        <dbReference type="ChEBI" id="CHEBI:15377"/>
        <dbReference type="ChEBI" id="CHEBI:17499"/>
        <dbReference type="ChEBI" id="CHEBI:60530"/>
        <dbReference type="ChEBI" id="CHEBI:61715"/>
        <dbReference type="EC" id="1.17.99.9"/>
    </reaction>
    <physiologicalReaction direction="left-to-right" evidence="1">
        <dbReference type="Rhea" id="RHEA:63389"/>
    </physiologicalReaction>
</comment>
<comment type="cofactor">
    <cofactor evidence="1">
        <name>heme b</name>
        <dbReference type="ChEBI" id="CHEBI:60344"/>
    </cofactor>
</comment>
<comment type="pathway">
    <text evidence="1">Porphyrin-containing compound metabolism; heme A biosynthesis; heme A from heme O: step 1/1.</text>
</comment>
<comment type="subunit">
    <text evidence="1">Interacts with CtaB.</text>
</comment>
<comment type="subcellular location">
    <subcellularLocation>
        <location evidence="1">Cell membrane</location>
        <topology evidence="1">Multi-pass membrane protein</topology>
    </subcellularLocation>
</comment>
<comment type="domain">
    <text evidence="1">The N-half (TM1-TM4) and C-half (TM5-TM8) domains are connected by an intracellular loop. Each domain is formed from four-helix bundles and they align in a pseudo twofold symmetry manner. The N-half domain is the substrate-heme O binding domain and the C-half domain is the cofactor heme B binding domain.</text>
</comment>
<comment type="domain">
    <text evidence="1">The cysteines of disulfide bond Cys-37 and Cys-44 may be involved in transfer of reducing equivalents from quinol in the membrane to the active site of the enzyme.</text>
</comment>
<comment type="similarity">
    <text evidence="1">Belongs to the COX15/CtaA family. Type 1 subfamily.</text>
</comment>
<sequence>MFRKQNLKWLGVLATIIMTFVQLGGALVTKTGSEDGCGSSWPLCNGALLPENLPIQTIIELSHRAVSAISLIVVLWLVITAWKNIGYIKEIKPLSIISVGFLLVQALVGAAAVIWQQNPYVLALHFGISLISFSSVFLMTLIIFSIDKKYEADILFIHKPLRILTWLMAIIVYLTIYTGALVRHTKSSLAYGAWPIPFDDIVPHNAHDWVQFSHRGMALITFIWIMITFIHAIKNYSDNRTVRYGYTASFILVILQVITGALSVITNVNLIIALFHALFITYLFGMIAYFILLMLRTTRSQK</sequence>
<name>CTAA_STAEQ</name>
<proteinExistence type="inferred from homology"/>
<evidence type="ECO:0000255" key="1">
    <source>
        <dbReference type="HAMAP-Rule" id="MF_01664"/>
    </source>
</evidence>
<protein>
    <recommendedName>
        <fullName evidence="1">Heme A synthase</fullName>
        <shortName evidence="1">HAS</shortName>
        <ecNumber evidence="1">1.17.99.9</ecNumber>
    </recommendedName>
    <alternativeName>
        <fullName evidence="1">Cytochrome aa3-controlling protein</fullName>
    </alternativeName>
</protein>